<proteinExistence type="uncertain"/>
<organism>
    <name type="scientific">Saccharomyces cerevisiae (strain ATCC 204508 / S288c)</name>
    <name type="common">Baker's yeast</name>
    <dbReference type="NCBI Taxonomy" id="559292"/>
    <lineage>
        <taxon>Eukaryota</taxon>
        <taxon>Fungi</taxon>
        <taxon>Dikarya</taxon>
        <taxon>Ascomycota</taxon>
        <taxon>Saccharomycotina</taxon>
        <taxon>Saccharomycetes</taxon>
        <taxon>Saccharomycetales</taxon>
        <taxon>Saccharomycetaceae</taxon>
        <taxon>Saccharomyces</taxon>
    </lineage>
</organism>
<evidence type="ECO:0000305" key="1"/>
<evidence type="ECO:0000305" key="2">
    <source>
    </source>
</evidence>
<reference key="1">
    <citation type="journal article" date="1992" name="Nature">
        <title>The complete DNA sequence of yeast chromosome III.</title>
        <authorList>
            <person name="Oliver S.G."/>
            <person name="van der Aart Q.J.M."/>
            <person name="Agostoni-Carbone M.L."/>
            <person name="Aigle M."/>
            <person name="Alberghina L."/>
            <person name="Alexandraki D."/>
            <person name="Antoine G."/>
            <person name="Anwar R."/>
            <person name="Ballesta J.P.G."/>
            <person name="Benit P."/>
            <person name="Berben G."/>
            <person name="Bergantino E."/>
            <person name="Biteau N."/>
            <person name="Bolle P.-A."/>
            <person name="Bolotin-Fukuhara M."/>
            <person name="Brown A."/>
            <person name="Brown A.J.P."/>
            <person name="Buhler J.-M."/>
            <person name="Carcano C."/>
            <person name="Carignani G."/>
            <person name="Cederberg H."/>
            <person name="Chanet R."/>
            <person name="Contreras R."/>
            <person name="Crouzet M."/>
            <person name="Daignan-Fornier B."/>
            <person name="Defoor E."/>
            <person name="Delgado M.D."/>
            <person name="Demolder J."/>
            <person name="Doira C."/>
            <person name="Dubois E."/>
            <person name="Dujon B."/>
            <person name="Duesterhoeft A."/>
            <person name="Erdmann D."/>
            <person name="Esteban M."/>
            <person name="Fabre F."/>
            <person name="Fairhead C."/>
            <person name="Faye G."/>
            <person name="Feldmann H."/>
            <person name="Fiers W."/>
            <person name="Francingues-Gaillard M.-C."/>
            <person name="Franco L."/>
            <person name="Frontali L."/>
            <person name="Fukuhara H."/>
            <person name="Fuller L.J."/>
            <person name="Galland P."/>
            <person name="Gent M.E."/>
            <person name="Gigot D."/>
            <person name="Gilliquet V."/>
            <person name="Glansdorff N."/>
            <person name="Goffeau A."/>
            <person name="Grenson M."/>
            <person name="Grisanti P."/>
            <person name="Grivell L.A."/>
            <person name="de Haan M."/>
            <person name="Haasemann M."/>
            <person name="Hatat D."/>
            <person name="Hoenicka J."/>
            <person name="Hegemann J.H."/>
            <person name="Herbert C.J."/>
            <person name="Hilger F."/>
            <person name="Hohmann S."/>
            <person name="Hollenberg C.P."/>
            <person name="Huse K."/>
            <person name="Iborra F."/>
            <person name="Indge K.J."/>
            <person name="Isono K."/>
            <person name="Jacq C."/>
            <person name="Jacquet M."/>
            <person name="James C.M."/>
            <person name="Jauniaux J.-C."/>
            <person name="Jia Y."/>
            <person name="Jimenez A."/>
            <person name="Kelly A."/>
            <person name="Kleinhans U."/>
            <person name="Kreisl P."/>
            <person name="Lanfranchi G."/>
            <person name="Lewis C."/>
            <person name="van der Linden C.G."/>
            <person name="Lucchini G."/>
            <person name="Lutzenkirchen K."/>
            <person name="Maat M.J."/>
            <person name="Mallet L."/>
            <person name="Mannhaupt G."/>
            <person name="Martegani E."/>
            <person name="Mathieu A."/>
            <person name="Maurer C.T.C."/>
            <person name="McConnell D."/>
            <person name="McKee R.A."/>
            <person name="Messenguy F."/>
            <person name="Mewes H.-W."/>
            <person name="Molemans F."/>
            <person name="Montague M.A."/>
            <person name="Muzi Falconi M."/>
            <person name="Navas L."/>
            <person name="Newlon C.S."/>
            <person name="Noone D."/>
            <person name="Pallier C."/>
            <person name="Panzeri L."/>
            <person name="Pearson B.M."/>
            <person name="Perea J."/>
            <person name="Philippsen P."/>
            <person name="Pierard A."/>
            <person name="Planta R.J."/>
            <person name="Plevani P."/>
            <person name="Poetsch B."/>
            <person name="Pohl F.M."/>
            <person name="Purnelle B."/>
            <person name="Ramezani Rad M."/>
            <person name="Rasmussen S.W."/>
            <person name="Raynal A."/>
            <person name="Remacha M.A."/>
            <person name="Richterich P."/>
            <person name="Roberts A.B."/>
            <person name="Rodriguez F."/>
            <person name="Sanz E."/>
            <person name="Schaaff-Gerstenschlaeger I."/>
            <person name="Scherens B."/>
            <person name="Schweitzer B."/>
            <person name="Shu Y."/>
            <person name="Skala J."/>
            <person name="Slonimski P.P."/>
            <person name="Sor F."/>
            <person name="Soustelle C."/>
            <person name="Spiegelberg R."/>
            <person name="Stateva L.I."/>
            <person name="Steensma H.Y."/>
            <person name="Steiner S."/>
            <person name="Thierry A."/>
            <person name="Thireos G."/>
            <person name="Tzermia M."/>
            <person name="Urrestarazu L.A."/>
            <person name="Valle G."/>
            <person name="Vetter I."/>
            <person name="van Vliet-Reedijk J.C."/>
            <person name="Voet M."/>
            <person name="Volckaert G."/>
            <person name="Vreken P."/>
            <person name="Wang H."/>
            <person name="Warmington J.R."/>
            <person name="von Wettstein D."/>
            <person name="Wicksteed B.L."/>
            <person name="Wilson C."/>
            <person name="Wurst H."/>
            <person name="Xu G."/>
            <person name="Yoshikawa A."/>
            <person name="Zimmermann F.K."/>
            <person name="Sgouros J.G."/>
        </authorList>
    </citation>
    <scope>NUCLEOTIDE SEQUENCE [LARGE SCALE GENOMIC DNA]</scope>
    <source>
        <strain>ATCC 204508 / S288c</strain>
    </source>
</reference>
<reference key="2">
    <citation type="journal article" date="2014" name="G3 (Bethesda)">
        <title>The reference genome sequence of Saccharomyces cerevisiae: Then and now.</title>
        <authorList>
            <person name="Engel S.R."/>
            <person name="Dietrich F.S."/>
            <person name="Fisk D.G."/>
            <person name="Binkley G."/>
            <person name="Balakrishnan R."/>
            <person name="Costanzo M.C."/>
            <person name="Dwight S.S."/>
            <person name="Hitz B.C."/>
            <person name="Karra K."/>
            <person name="Nash R.S."/>
            <person name="Weng S."/>
            <person name="Wong E.D."/>
            <person name="Lloyd P."/>
            <person name="Skrzypek M.S."/>
            <person name="Miyasato S.R."/>
            <person name="Simison M."/>
            <person name="Cherry J.M."/>
        </authorList>
    </citation>
    <scope>GENOME REANNOTATION</scope>
    <source>
        <strain>ATCC 204508 / S288c</strain>
    </source>
</reference>
<dbReference type="EMBL" id="X59720">
    <property type="protein sequence ID" value="CAA42279.1"/>
    <property type="molecule type" value="Genomic_DNA"/>
</dbReference>
<dbReference type="PIR" id="S19479">
    <property type="entry name" value="S19479"/>
</dbReference>
<dbReference type="IntAct" id="P25640">
    <property type="interactions" value="1"/>
</dbReference>
<dbReference type="PaxDb" id="4932-YCR064C"/>
<dbReference type="EnsemblFungi" id="YCR064C_mRNA">
    <property type="protein sequence ID" value="YCR064C"/>
    <property type="gene ID" value="YCR064C"/>
</dbReference>
<dbReference type="AGR" id="SGD:S000000660"/>
<dbReference type="SGD" id="S000000660">
    <property type="gene designation" value="YCR064C"/>
</dbReference>
<dbReference type="HOGENOM" id="CLU_1877063_0_0_1"/>
<gene>
    <name type="ordered locus">YCR064C</name>
    <name type="ORF">YCR64C</name>
</gene>
<comment type="miscellaneous">
    <text evidence="1">Partially overlaps BUD31.</text>
</comment>
<comment type="caution">
    <text evidence="2">Product of a dubious gene prediction unlikely to encode a functional protein. Because of that it is not part of the S.cerevisiae S288c complete/reference proteome set.</text>
</comment>
<protein>
    <recommendedName>
        <fullName>Putative uncharacterized protein YCR064C</fullName>
    </recommendedName>
</protein>
<accession>P25640</accession>
<feature type="chain" id="PRO_0000202573" description="Putative uncharacterized protein YCR064C">
    <location>
        <begin position="1"/>
        <end position="136"/>
    </location>
</feature>
<name>YCV4_YEAST</name>
<sequence>MYLERWWWSCIISQSCSLDFAASLDDLSFWASLSWISKSVRVGLIFSNPSGAGLDLLVFMRGMSFCEVSFASLDGCRGVYIDDESLRKFFFFFQYFTFRCERQMYYAFKSQRSIIVKVPTTTRVIDLVLVVNVLSL</sequence>